<organism>
    <name type="scientific">Listeria monocytogenes serovar 1/2a (strain ATCC BAA-679 / EGD-e)</name>
    <dbReference type="NCBI Taxonomy" id="169963"/>
    <lineage>
        <taxon>Bacteria</taxon>
        <taxon>Bacillati</taxon>
        <taxon>Bacillota</taxon>
        <taxon>Bacilli</taxon>
        <taxon>Bacillales</taxon>
        <taxon>Listeriaceae</taxon>
        <taxon>Listeria</taxon>
    </lineage>
</organism>
<feature type="chain" id="PRO_0000339718" description="Xanthine phosphoribosyltransferase">
    <location>
        <begin position="1"/>
        <end position="192"/>
    </location>
</feature>
<feature type="binding site" evidence="1">
    <location>
        <position position="20"/>
    </location>
    <ligand>
        <name>xanthine</name>
        <dbReference type="ChEBI" id="CHEBI:17712"/>
    </ligand>
</feature>
<feature type="binding site" evidence="1">
    <location>
        <position position="27"/>
    </location>
    <ligand>
        <name>xanthine</name>
        <dbReference type="ChEBI" id="CHEBI:17712"/>
    </ligand>
</feature>
<feature type="binding site" evidence="1">
    <location>
        <begin position="128"/>
        <end position="132"/>
    </location>
    <ligand>
        <name>5-phospho-alpha-D-ribose 1-diphosphate</name>
        <dbReference type="ChEBI" id="CHEBI:58017"/>
    </ligand>
</feature>
<feature type="binding site" evidence="1">
    <location>
        <position position="156"/>
    </location>
    <ligand>
        <name>xanthine</name>
        <dbReference type="ChEBI" id="CHEBI:17712"/>
    </ligand>
</feature>
<reference key="1">
    <citation type="journal article" date="2001" name="Science">
        <title>Comparative genomics of Listeria species.</title>
        <authorList>
            <person name="Glaser P."/>
            <person name="Frangeul L."/>
            <person name="Buchrieser C."/>
            <person name="Rusniok C."/>
            <person name="Amend A."/>
            <person name="Baquero F."/>
            <person name="Berche P."/>
            <person name="Bloecker H."/>
            <person name="Brandt P."/>
            <person name="Chakraborty T."/>
            <person name="Charbit A."/>
            <person name="Chetouani F."/>
            <person name="Couve E."/>
            <person name="de Daruvar A."/>
            <person name="Dehoux P."/>
            <person name="Domann E."/>
            <person name="Dominguez-Bernal G."/>
            <person name="Duchaud E."/>
            <person name="Durant L."/>
            <person name="Dussurget O."/>
            <person name="Entian K.-D."/>
            <person name="Fsihi H."/>
            <person name="Garcia-del Portillo F."/>
            <person name="Garrido P."/>
            <person name="Gautier L."/>
            <person name="Goebel W."/>
            <person name="Gomez-Lopez N."/>
            <person name="Hain T."/>
            <person name="Hauf J."/>
            <person name="Jackson D."/>
            <person name="Jones L.-M."/>
            <person name="Kaerst U."/>
            <person name="Kreft J."/>
            <person name="Kuhn M."/>
            <person name="Kunst F."/>
            <person name="Kurapkat G."/>
            <person name="Madueno E."/>
            <person name="Maitournam A."/>
            <person name="Mata Vicente J."/>
            <person name="Ng E."/>
            <person name="Nedjari H."/>
            <person name="Nordsiek G."/>
            <person name="Novella S."/>
            <person name="de Pablos B."/>
            <person name="Perez-Diaz J.-C."/>
            <person name="Purcell R."/>
            <person name="Remmel B."/>
            <person name="Rose M."/>
            <person name="Schlueter T."/>
            <person name="Simoes N."/>
            <person name="Tierrez A."/>
            <person name="Vazquez-Boland J.-A."/>
            <person name="Voss H."/>
            <person name="Wehland J."/>
            <person name="Cossart P."/>
        </authorList>
    </citation>
    <scope>NUCLEOTIDE SEQUENCE [LARGE SCALE GENOMIC DNA]</scope>
    <source>
        <strain>ATCC BAA-679 / EGD-e</strain>
    </source>
</reference>
<gene>
    <name evidence="1" type="primary">xpt</name>
    <name type="ordered locus">lmo1885</name>
</gene>
<accession>Q8Y617</accession>
<protein>
    <recommendedName>
        <fullName evidence="1">Xanthine phosphoribosyltransferase</fullName>
        <shortName evidence="1">XPRTase</shortName>
        <ecNumber evidence="1">2.4.2.22</ecNumber>
    </recommendedName>
</protein>
<name>XPT_LISMO</name>
<keyword id="KW-0963">Cytoplasm</keyword>
<keyword id="KW-0328">Glycosyltransferase</keyword>
<keyword id="KW-0660">Purine salvage</keyword>
<keyword id="KW-1185">Reference proteome</keyword>
<keyword id="KW-0808">Transferase</keyword>
<sequence length="192" mass="20916">MKLLEEFIQEKGTVLPGNVLKVDAFLNHQIDPVLMQAMGNEFAKRFQDLGITKIVTIESSGIAPAVFAGLALSVPVVFARKKKSVTLTDNLFTSTVYSYTKKESNDISVSKQFLTADDTILVIDDFLANGQAALGLLEIAEHAGAKVAGIGIVIEKSFQQGRELLNKTGIPVYSLARIASLENEEILFLEEE</sequence>
<proteinExistence type="inferred from homology"/>
<comment type="function">
    <text evidence="1">Converts the preformed base xanthine, a product of nucleic acid breakdown, to xanthosine 5'-monophosphate (XMP), so it can be reused for RNA or DNA synthesis.</text>
</comment>
<comment type="catalytic activity">
    <reaction evidence="1">
        <text>XMP + diphosphate = xanthine + 5-phospho-alpha-D-ribose 1-diphosphate</text>
        <dbReference type="Rhea" id="RHEA:10800"/>
        <dbReference type="ChEBI" id="CHEBI:17712"/>
        <dbReference type="ChEBI" id="CHEBI:33019"/>
        <dbReference type="ChEBI" id="CHEBI:57464"/>
        <dbReference type="ChEBI" id="CHEBI:58017"/>
        <dbReference type="EC" id="2.4.2.22"/>
    </reaction>
</comment>
<comment type="pathway">
    <text evidence="1">Purine metabolism; XMP biosynthesis via salvage pathway; XMP from xanthine: step 1/1.</text>
</comment>
<comment type="subunit">
    <text evidence="1">Homodimer.</text>
</comment>
<comment type="subcellular location">
    <subcellularLocation>
        <location evidence="1">Cytoplasm</location>
    </subcellularLocation>
</comment>
<comment type="similarity">
    <text evidence="1">Belongs to the purine/pyrimidine phosphoribosyltransferase family. Xpt subfamily.</text>
</comment>
<dbReference type="EC" id="2.4.2.22" evidence="1"/>
<dbReference type="EMBL" id="AL591981">
    <property type="protein sequence ID" value="CAC99963.1"/>
    <property type="molecule type" value="Genomic_DNA"/>
</dbReference>
<dbReference type="PIR" id="AE1310">
    <property type="entry name" value="AE1310"/>
</dbReference>
<dbReference type="RefSeq" id="NP_465409.1">
    <property type="nucleotide sequence ID" value="NC_003210.1"/>
</dbReference>
<dbReference type="RefSeq" id="WP_003728269.1">
    <property type="nucleotide sequence ID" value="NZ_CP149495.1"/>
</dbReference>
<dbReference type="SMR" id="Q8Y617"/>
<dbReference type="STRING" id="169963.gene:17594570"/>
<dbReference type="PaxDb" id="169963-lmo1885"/>
<dbReference type="EnsemblBacteria" id="CAC99963">
    <property type="protein sequence ID" value="CAC99963"/>
    <property type="gene ID" value="CAC99963"/>
</dbReference>
<dbReference type="GeneID" id="985807"/>
<dbReference type="KEGG" id="lmo:lmo1885"/>
<dbReference type="PATRIC" id="fig|169963.11.peg.1930"/>
<dbReference type="eggNOG" id="COG0503">
    <property type="taxonomic scope" value="Bacteria"/>
</dbReference>
<dbReference type="HOGENOM" id="CLU_099015_0_0_9"/>
<dbReference type="OrthoDB" id="9790678at2"/>
<dbReference type="PhylomeDB" id="Q8Y617"/>
<dbReference type="BioCyc" id="LMON169963:LMO1885-MONOMER"/>
<dbReference type="UniPathway" id="UPA00602">
    <property type="reaction ID" value="UER00658"/>
</dbReference>
<dbReference type="Proteomes" id="UP000000817">
    <property type="component" value="Chromosome"/>
</dbReference>
<dbReference type="GO" id="GO:0005737">
    <property type="term" value="C:cytoplasm"/>
    <property type="evidence" value="ECO:0007669"/>
    <property type="project" value="UniProtKB-SubCell"/>
</dbReference>
<dbReference type="GO" id="GO:0000310">
    <property type="term" value="F:xanthine phosphoribosyltransferase activity"/>
    <property type="evidence" value="ECO:0007669"/>
    <property type="project" value="UniProtKB-UniRule"/>
</dbReference>
<dbReference type="GO" id="GO:0006166">
    <property type="term" value="P:purine ribonucleoside salvage"/>
    <property type="evidence" value="ECO:0007669"/>
    <property type="project" value="UniProtKB-KW"/>
</dbReference>
<dbReference type="GO" id="GO:0046110">
    <property type="term" value="P:xanthine metabolic process"/>
    <property type="evidence" value="ECO:0007669"/>
    <property type="project" value="InterPro"/>
</dbReference>
<dbReference type="GO" id="GO:0032265">
    <property type="term" value="P:XMP salvage"/>
    <property type="evidence" value="ECO:0007669"/>
    <property type="project" value="UniProtKB-UniRule"/>
</dbReference>
<dbReference type="CDD" id="cd06223">
    <property type="entry name" value="PRTases_typeI"/>
    <property type="match status" value="1"/>
</dbReference>
<dbReference type="FunFam" id="3.40.50.2020:FF:000027">
    <property type="entry name" value="Xanthine phosphoribosyltransferase"/>
    <property type="match status" value="1"/>
</dbReference>
<dbReference type="Gene3D" id="3.40.50.2020">
    <property type="match status" value="1"/>
</dbReference>
<dbReference type="HAMAP" id="MF_01184">
    <property type="entry name" value="XPRTase"/>
    <property type="match status" value="1"/>
</dbReference>
<dbReference type="InterPro" id="IPR000836">
    <property type="entry name" value="PRibTrfase_dom"/>
</dbReference>
<dbReference type="InterPro" id="IPR029057">
    <property type="entry name" value="PRTase-like"/>
</dbReference>
<dbReference type="InterPro" id="IPR050118">
    <property type="entry name" value="Pur/Pyrimidine_PRTase"/>
</dbReference>
<dbReference type="InterPro" id="IPR010079">
    <property type="entry name" value="Xanthine_PRibTrfase"/>
</dbReference>
<dbReference type="NCBIfam" id="NF006671">
    <property type="entry name" value="PRK09219.1"/>
    <property type="match status" value="1"/>
</dbReference>
<dbReference type="NCBIfam" id="TIGR01744">
    <property type="entry name" value="XPRTase"/>
    <property type="match status" value="1"/>
</dbReference>
<dbReference type="PANTHER" id="PTHR43864">
    <property type="entry name" value="HYPOXANTHINE/GUANINE PHOSPHORIBOSYLTRANSFERASE"/>
    <property type="match status" value="1"/>
</dbReference>
<dbReference type="PANTHER" id="PTHR43864:SF1">
    <property type="entry name" value="XANTHINE PHOSPHORIBOSYLTRANSFERASE"/>
    <property type="match status" value="1"/>
</dbReference>
<dbReference type="Pfam" id="PF00156">
    <property type="entry name" value="Pribosyltran"/>
    <property type="match status" value="1"/>
</dbReference>
<dbReference type="SUPFAM" id="SSF53271">
    <property type="entry name" value="PRTase-like"/>
    <property type="match status" value="1"/>
</dbReference>
<evidence type="ECO:0000255" key="1">
    <source>
        <dbReference type="HAMAP-Rule" id="MF_01184"/>
    </source>
</evidence>